<comment type="function">
    <text evidence="1">The RuvA-RuvB-RuvC complex processes Holliday junction (HJ) DNA during genetic recombination and DNA repair. Endonuclease that resolves HJ intermediates. Cleaves cruciform DNA by making single-stranded nicks across the HJ at symmetrical positions within the homologous arms, yielding a 5'-phosphate and a 3'-hydroxyl group; requires a central core of homology in the junction. The consensus cleavage sequence is 5'-(A/T)TT(C/G)-3'. Cleavage occurs on the 3'-side of the TT dinucleotide at the point of strand exchange. HJ branch migration catalyzed by RuvA-RuvB allows RuvC to scan DNA until it finds its consensus sequence, where it cleaves and resolves the cruciform DNA.</text>
</comment>
<comment type="catalytic activity">
    <reaction evidence="1">
        <text>Endonucleolytic cleavage at a junction such as a reciprocal single-stranded crossover between two homologous DNA duplexes (Holliday junction).</text>
        <dbReference type="EC" id="3.1.21.10"/>
    </reaction>
</comment>
<comment type="cofactor">
    <cofactor evidence="1">
        <name>Mg(2+)</name>
        <dbReference type="ChEBI" id="CHEBI:18420"/>
    </cofactor>
    <text evidence="1">Binds 2 Mg(2+) ion per subunit.</text>
</comment>
<comment type="subunit">
    <text evidence="1">Homodimer which binds Holliday junction (HJ) DNA. The HJ becomes 2-fold symmetrical on binding to RuvC with unstacked arms; it has a different conformation from HJ DNA in complex with RuvA. In the full resolvosome a probable DNA-RuvA(4)-RuvB(12)-RuvC(2) complex forms which resolves the HJ.</text>
</comment>
<comment type="subcellular location">
    <subcellularLocation>
        <location evidence="1">Cytoplasm</location>
    </subcellularLocation>
</comment>
<comment type="similarity">
    <text evidence="1">Belongs to the RuvC family.</text>
</comment>
<dbReference type="EC" id="3.1.21.10" evidence="1"/>
<dbReference type="EMBL" id="CP000110">
    <property type="protein sequence ID" value="ABB35694.1"/>
    <property type="molecule type" value="Genomic_DNA"/>
</dbReference>
<dbReference type="RefSeq" id="WP_011364903.1">
    <property type="nucleotide sequence ID" value="NC_007516.1"/>
</dbReference>
<dbReference type="SMR" id="Q3AI88"/>
<dbReference type="STRING" id="110662.Syncc9605_1953"/>
<dbReference type="KEGG" id="syd:Syncc9605_1953"/>
<dbReference type="eggNOG" id="COG0817">
    <property type="taxonomic scope" value="Bacteria"/>
</dbReference>
<dbReference type="HOGENOM" id="CLU_091257_3_1_3"/>
<dbReference type="OrthoDB" id="9805499at2"/>
<dbReference type="GO" id="GO:0005737">
    <property type="term" value="C:cytoplasm"/>
    <property type="evidence" value="ECO:0007669"/>
    <property type="project" value="UniProtKB-SubCell"/>
</dbReference>
<dbReference type="GO" id="GO:0048476">
    <property type="term" value="C:Holliday junction resolvase complex"/>
    <property type="evidence" value="ECO:0007669"/>
    <property type="project" value="UniProtKB-UniRule"/>
</dbReference>
<dbReference type="GO" id="GO:0008821">
    <property type="term" value="F:crossover junction DNA endonuclease activity"/>
    <property type="evidence" value="ECO:0007669"/>
    <property type="project" value="UniProtKB-UniRule"/>
</dbReference>
<dbReference type="GO" id="GO:0003677">
    <property type="term" value="F:DNA binding"/>
    <property type="evidence" value="ECO:0007669"/>
    <property type="project" value="UniProtKB-KW"/>
</dbReference>
<dbReference type="GO" id="GO:0000287">
    <property type="term" value="F:magnesium ion binding"/>
    <property type="evidence" value="ECO:0007669"/>
    <property type="project" value="UniProtKB-UniRule"/>
</dbReference>
<dbReference type="GO" id="GO:0006310">
    <property type="term" value="P:DNA recombination"/>
    <property type="evidence" value="ECO:0007669"/>
    <property type="project" value="UniProtKB-UniRule"/>
</dbReference>
<dbReference type="GO" id="GO:0006281">
    <property type="term" value="P:DNA repair"/>
    <property type="evidence" value="ECO:0007669"/>
    <property type="project" value="UniProtKB-UniRule"/>
</dbReference>
<dbReference type="CDD" id="cd16962">
    <property type="entry name" value="RuvC"/>
    <property type="match status" value="1"/>
</dbReference>
<dbReference type="FunFam" id="3.30.420.10:FF:000002">
    <property type="entry name" value="Crossover junction endodeoxyribonuclease RuvC"/>
    <property type="match status" value="1"/>
</dbReference>
<dbReference type="Gene3D" id="3.30.420.10">
    <property type="entry name" value="Ribonuclease H-like superfamily/Ribonuclease H"/>
    <property type="match status" value="1"/>
</dbReference>
<dbReference type="HAMAP" id="MF_00034">
    <property type="entry name" value="RuvC"/>
    <property type="match status" value="1"/>
</dbReference>
<dbReference type="InterPro" id="IPR012337">
    <property type="entry name" value="RNaseH-like_sf"/>
</dbReference>
<dbReference type="InterPro" id="IPR036397">
    <property type="entry name" value="RNaseH_sf"/>
</dbReference>
<dbReference type="InterPro" id="IPR020563">
    <property type="entry name" value="X-over_junc_endoDNase_Mg_BS"/>
</dbReference>
<dbReference type="InterPro" id="IPR002176">
    <property type="entry name" value="X-over_junc_endoDNase_RuvC"/>
</dbReference>
<dbReference type="NCBIfam" id="NF000711">
    <property type="entry name" value="PRK00039.2-1"/>
    <property type="match status" value="1"/>
</dbReference>
<dbReference type="PANTHER" id="PTHR30194">
    <property type="entry name" value="CROSSOVER JUNCTION ENDODEOXYRIBONUCLEASE RUVC"/>
    <property type="match status" value="1"/>
</dbReference>
<dbReference type="PANTHER" id="PTHR30194:SF3">
    <property type="entry name" value="CROSSOVER JUNCTION ENDODEOXYRIBONUCLEASE RUVC"/>
    <property type="match status" value="1"/>
</dbReference>
<dbReference type="Pfam" id="PF02075">
    <property type="entry name" value="RuvC"/>
    <property type="match status" value="1"/>
</dbReference>
<dbReference type="PRINTS" id="PR00696">
    <property type="entry name" value="RSOLVASERUVC"/>
</dbReference>
<dbReference type="SUPFAM" id="SSF53098">
    <property type="entry name" value="Ribonuclease H-like"/>
    <property type="match status" value="1"/>
</dbReference>
<dbReference type="PROSITE" id="PS01321">
    <property type="entry name" value="RUVC"/>
    <property type="match status" value="1"/>
</dbReference>
<accession>Q3AI88</accession>
<reference key="1">
    <citation type="submission" date="2005-07" db="EMBL/GenBank/DDBJ databases">
        <title>Complete sequence of Synechococcus sp. CC9605.</title>
        <authorList>
            <consortium name="US DOE Joint Genome Institute"/>
            <person name="Copeland A."/>
            <person name="Lucas S."/>
            <person name="Lapidus A."/>
            <person name="Barry K."/>
            <person name="Detter J.C."/>
            <person name="Glavina T."/>
            <person name="Hammon N."/>
            <person name="Israni S."/>
            <person name="Pitluck S."/>
            <person name="Schmutz J."/>
            <person name="Martinez M."/>
            <person name="Larimer F."/>
            <person name="Land M."/>
            <person name="Kyrpides N."/>
            <person name="Ivanova N."/>
            <person name="Richardson P."/>
        </authorList>
    </citation>
    <scope>NUCLEOTIDE SEQUENCE [LARGE SCALE GENOMIC DNA]</scope>
    <source>
        <strain>CC9605</strain>
    </source>
</reference>
<name>RUVC_SYNSC</name>
<sequence length="154" mass="17184">MRILGIDPGLARVGYGVIDIQDGCQRMLDCGIIQTNSDRSDGDRMVEIAGDLRQLIRIWRPELAAVEKFFFYRSSNTINVVQARGVVVMTLARFKIPMVEFPPMQIKLAVAGFGHAEKDEVLEAVMRELSLEEPPRPDDAADALAVALTAWLQR</sequence>
<protein>
    <recommendedName>
        <fullName evidence="1">Crossover junction endodeoxyribonuclease RuvC</fullName>
        <ecNumber evidence="1">3.1.21.10</ecNumber>
    </recommendedName>
    <alternativeName>
        <fullName evidence="1">Holliday junction nuclease RuvC</fullName>
    </alternativeName>
    <alternativeName>
        <fullName evidence="1">Holliday junction resolvase RuvC</fullName>
    </alternativeName>
</protein>
<evidence type="ECO:0000255" key="1">
    <source>
        <dbReference type="HAMAP-Rule" id="MF_00034"/>
    </source>
</evidence>
<keyword id="KW-0963">Cytoplasm</keyword>
<keyword id="KW-0227">DNA damage</keyword>
<keyword id="KW-0233">DNA recombination</keyword>
<keyword id="KW-0234">DNA repair</keyword>
<keyword id="KW-0238">DNA-binding</keyword>
<keyword id="KW-0255">Endonuclease</keyword>
<keyword id="KW-0378">Hydrolase</keyword>
<keyword id="KW-0460">Magnesium</keyword>
<keyword id="KW-0479">Metal-binding</keyword>
<keyword id="KW-0540">Nuclease</keyword>
<proteinExistence type="inferred from homology"/>
<feature type="chain" id="PRO_1000002846" description="Crossover junction endodeoxyribonuclease RuvC">
    <location>
        <begin position="1"/>
        <end position="154"/>
    </location>
</feature>
<feature type="active site" evidence="1">
    <location>
        <position position="7"/>
    </location>
</feature>
<feature type="active site" evidence="1">
    <location>
        <position position="67"/>
    </location>
</feature>
<feature type="active site" evidence="1">
    <location>
        <position position="139"/>
    </location>
</feature>
<feature type="binding site" evidence="1">
    <location>
        <position position="7"/>
    </location>
    <ligand>
        <name>Mg(2+)</name>
        <dbReference type="ChEBI" id="CHEBI:18420"/>
        <label>1</label>
    </ligand>
</feature>
<feature type="binding site" evidence="1">
    <location>
        <position position="67"/>
    </location>
    <ligand>
        <name>Mg(2+)</name>
        <dbReference type="ChEBI" id="CHEBI:18420"/>
        <label>2</label>
    </ligand>
</feature>
<feature type="binding site" evidence="1">
    <location>
        <position position="139"/>
    </location>
    <ligand>
        <name>Mg(2+)</name>
        <dbReference type="ChEBI" id="CHEBI:18420"/>
        <label>1</label>
    </ligand>
</feature>
<organism>
    <name type="scientific">Synechococcus sp. (strain CC9605)</name>
    <dbReference type="NCBI Taxonomy" id="110662"/>
    <lineage>
        <taxon>Bacteria</taxon>
        <taxon>Bacillati</taxon>
        <taxon>Cyanobacteriota</taxon>
        <taxon>Cyanophyceae</taxon>
        <taxon>Synechococcales</taxon>
        <taxon>Synechococcaceae</taxon>
        <taxon>Synechococcus</taxon>
    </lineage>
</organism>
<gene>
    <name evidence="1" type="primary">ruvC</name>
    <name type="ordered locus">Syncc9605_1953</name>
</gene>